<dbReference type="EMBL" id="CT573213">
    <property type="protein sequence ID" value="CAJ59284.1"/>
    <property type="molecule type" value="Genomic_DNA"/>
</dbReference>
<dbReference type="RefSeq" id="WP_011601859.1">
    <property type="nucleotide sequence ID" value="NC_008278.1"/>
</dbReference>
<dbReference type="SMR" id="Q0RT19"/>
<dbReference type="STRING" id="326424.FRAAL0610"/>
<dbReference type="KEGG" id="fal:FRAAL0610"/>
<dbReference type="eggNOG" id="COG0353">
    <property type="taxonomic scope" value="Bacteria"/>
</dbReference>
<dbReference type="HOGENOM" id="CLU_060739_1_0_11"/>
<dbReference type="OrthoDB" id="9802672at2"/>
<dbReference type="Proteomes" id="UP000000657">
    <property type="component" value="Chromosome"/>
</dbReference>
<dbReference type="GO" id="GO:0003677">
    <property type="term" value="F:DNA binding"/>
    <property type="evidence" value="ECO:0007669"/>
    <property type="project" value="UniProtKB-UniRule"/>
</dbReference>
<dbReference type="GO" id="GO:0008270">
    <property type="term" value="F:zinc ion binding"/>
    <property type="evidence" value="ECO:0007669"/>
    <property type="project" value="UniProtKB-KW"/>
</dbReference>
<dbReference type="GO" id="GO:0006310">
    <property type="term" value="P:DNA recombination"/>
    <property type="evidence" value="ECO:0007669"/>
    <property type="project" value="UniProtKB-UniRule"/>
</dbReference>
<dbReference type="GO" id="GO:0006281">
    <property type="term" value="P:DNA repair"/>
    <property type="evidence" value="ECO:0007669"/>
    <property type="project" value="UniProtKB-UniRule"/>
</dbReference>
<dbReference type="CDD" id="cd01025">
    <property type="entry name" value="TOPRIM_recR"/>
    <property type="match status" value="1"/>
</dbReference>
<dbReference type="Gene3D" id="3.30.60.80">
    <property type="match status" value="1"/>
</dbReference>
<dbReference type="Gene3D" id="3.40.1360.10">
    <property type="match status" value="1"/>
</dbReference>
<dbReference type="Gene3D" id="6.10.250.240">
    <property type="match status" value="1"/>
</dbReference>
<dbReference type="Gene3D" id="1.10.8.420">
    <property type="entry name" value="RecR Domain 1"/>
    <property type="match status" value="1"/>
</dbReference>
<dbReference type="HAMAP" id="MF_00017">
    <property type="entry name" value="RecR"/>
    <property type="match status" value="1"/>
</dbReference>
<dbReference type="InterPro" id="IPR000093">
    <property type="entry name" value="DNA_Rcmb_RecR"/>
</dbReference>
<dbReference type="InterPro" id="IPR003583">
    <property type="entry name" value="Hlx-hairpin-Hlx_DNA-bd_motif"/>
</dbReference>
<dbReference type="InterPro" id="IPR023627">
    <property type="entry name" value="Rcmb_RecR"/>
</dbReference>
<dbReference type="InterPro" id="IPR015967">
    <property type="entry name" value="Rcmb_RecR_Znf"/>
</dbReference>
<dbReference type="InterPro" id="IPR006171">
    <property type="entry name" value="TOPRIM_dom"/>
</dbReference>
<dbReference type="InterPro" id="IPR034137">
    <property type="entry name" value="TOPRIM_RecR"/>
</dbReference>
<dbReference type="NCBIfam" id="TIGR00615">
    <property type="entry name" value="recR"/>
    <property type="match status" value="1"/>
</dbReference>
<dbReference type="PANTHER" id="PTHR30446">
    <property type="entry name" value="RECOMBINATION PROTEIN RECR"/>
    <property type="match status" value="1"/>
</dbReference>
<dbReference type="PANTHER" id="PTHR30446:SF0">
    <property type="entry name" value="RECOMBINATION PROTEIN RECR"/>
    <property type="match status" value="1"/>
</dbReference>
<dbReference type="Pfam" id="PF21175">
    <property type="entry name" value="RecR_C"/>
    <property type="match status" value="1"/>
</dbReference>
<dbReference type="Pfam" id="PF21176">
    <property type="entry name" value="RecR_HhH"/>
    <property type="match status" value="1"/>
</dbReference>
<dbReference type="Pfam" id="PF02132">
    <property type="entry name" value="RecR_ZnF"/>
    <property type="match status" value="1"/>
</dbReference>
<dbReference type="Pfam" id="PF13662">
    <property type="entry name" value="Toprim_4"/>
    <property type="match status" value="1"/>
</dbReference>
<dbReference type="SMART" id="SM00278">
    <property type="entry name" value="HhH1"/>
    <property type="match status" value="1"/>
</dbReference>
<dbReference type="SMART" id="SM00493">
    <property type="entry name" value="TOPRIM"/>
    <property type="match status" value="1"/>
</dbReference>
<dbReference type="SUPFAM" id="SSF111304">
    <property type="entry name" value="Recombination protein RecR"/>
    <property type="match status" value="1"/>
</dbReference>
<dbReference type="PROSITE" id="PS01300">
    <property type="entry name" value="RECR"/>
    <property type="match status" value="1"/>
</dbReference>
<dbReference type="PROSITE" id="PS50880">
    <property type="entry name" value="TOPRIM"/>
    <property type="match status" value="1"/>
</dbReference>
<reference key="1">
    <citation type="journal article" date="2007" name="Genome Res.">
        <title>Genome characteristics of facultatively symbiotic Frankia sp. strains reflect host range and host plant biogeography.</title>
        <authorList>
            <person name="Normand P."/>
            <person name="Lapierre P."/>
            <person name="Tisa L.S."/>
            <person name="Gogarten J.P."/>
            <person name="Alloisio N."/>
            <person name="Bagnarol E."/>
            <person name="Bassi C.A."/>
            <person name="Berry A.M."/>
            <person name="Bickhart D.M."/>
            <person name="Choisne N."/>
            <person name="Couloux A."/>
            <person name="Cournoyer B."/>
            <person name="Cruveiller S."/>
            <person name="Daubin V."/>
            <person name="Demange N."/>
            <person name="Francino M.P."/>
            <person name="Goltsman E."/>
            <person name="Huang Y."/>
            <person name="Kopp O.R."/>
            <person name="Labarre L."/>
            <person name="Lapidus A."/>
            <person name="Lavire C."/>
            <person name="Marechal J."/>
            <person name="Martinez M."/>
            <person name="Mastronunzio J.E."/>
            <person name="Mullin B.C."/>
            <person name="Niemann J."/>
            <person name="Pujic P."/>
            <person name="Rawnsley T."/>
            <person name="Rouy Z."/>
            <person name="Schenowitz C."/>
            <person name="Sellstedt A."/>
            <person name="Tavares F."/>
            <person name="Tomkins J.P."/>
            <person name="Vallenet D."/>
            <person name="Valverde C."/>
            <person name="Wall L.G."/>
            <person name="Wang Y."/>
            <person name="Medigue C."/>
            <person name="Benson D.R."/>
        </authorList>
    </citation>
    <scope>NUCLEOTIDE SEQUENCE [LARGE SCALE GENOMIC DNA]</scope>
    <source>
        <strain>DSM 45986 / CECT 9034 / ACN14a</strain>
    </source>
</reference>
<protein>
    <recommendedName>
        <fullName evidence="1">Recombination protein RecR</fullName>
    </recommendedName>
</protein>
<feature type="chain" id="PRO_0000322891" description="Recombination protein RecR">
    <location>
        <begin position="1"/>
        <end position="199"/>
    </location>
</feature>
<feature type="domain" description="Toprim" evidence="1">
    <location>
        <begin position="79"/>
        <end position="174"/>
    </location>
</feature>
<feature type="zinc finger region" description="C4-type" evidence="1">
    <location>
        <begin position="56"/>
        <end position="71"/>
    </location>
</feature>
<evidence type="ECO:0000255" key="1">
    <source>
        <dbReference type="HAMAP-Rule" id="MF_00017"/>
    </source>
</evidence>
<name>RECR_FRAAA</name>
<sequence>MYEGIVQDLIDELGRLPGIGPKSAQRIAFHLLAADPVDVRRLATALTEVKDKVRFCRSCFNVAQSELCRICADPRRDQALICVVEEPKDVVAIERTREFRGRYHVLGGAINPIGGVGPDDLHIRELVARLADGTVTELILATDPNTEGEVTASYLARQIGPMGLRVTRLASGLPMGGDLEWADEVTLGRAFEGRRVVNA</sequence>
<gene>
    <name evidence="1" type="primary">recR</name>
    <name type="ordered locus">FRAAL0610</name>
</gene>
<comment type="function">
    <text evidence="1">May play a role in DNA repair. It seems to be involved in an RecBC-independent recombinational process of DNA repair. It may act with RecF and RecO.</text>
</comment>
<comment type="similarity">
    <text evidence="1">Belongs to the RecR family.</text>
</comment>
<keyword id="KW-0227">DNA damage</keyword>
<keyword id="KW-0233">DNA recombination</keyword>
<keyword id="KW-0234">DNA repair</keyword>
<keyword id="KW-0479">Metal-binding</keyword>
<keyword id="KW-1185">Reference proteome</keyword>
<keyword id="KW-0862">Zinc</keyword>
<keyword id="KW-0863">Zinc-finger</keyword>
<organism>
    <name type="scientific">Frankia alni (strain DSM 45986 / CECT 9034 / ACN14a)</name>
    <dbReference type="NCBI Taxonomy" id="326424"/>
    <lineage>
        <taxon>Bacteria</taxon>
        <taxon>Bacillati</taxon>
        <taxon>Actinomycetota</taxon>
        <taxon>Actinomycetes</taxon>
        <taxon>Frankiales</taxon>
        <taxon>Frankiaceae</taxon>
        <taxon>Frankia</taxon>
    </lineage>
</organism>
<proteinExistence type="inferred from homology"/>
<accession>Q0RT19</accession>